<name>KPSD1_ECOLX</name>
<protein>
    <recommendedName>
        <fullName>Polysialic acid transport protein KpsD</fullName>
    </recommendedName>
</protein>
<keyword id="KW-0972">Capsule biogenesis/degradation</keyword>
<keyword id="KW-0903">Direct protein sequencing</keyword>
<keyword id="KW-0574">Periplasm</keyword>
<keyword id="KW-0732">Signal</keyword>
<keyword id="KW-0813">Transport</keyword>
<gene>
    <name type="primary">kpsD</name>
</gene>
<comment type="function">
    <text>Involved in the translocation of the polysialic acid capsule across the outer membrane to the cell surface. May function as the periplasmic binding element of the PSA transport system, in which it transiently interacts with the membrane component of the transporter, binds polysaccharide and transports the polymer to a component in the outer membrane.</text>
</comment>
<comment type="subcellular location">
    <subcellularLocation>
        <location>Periplasm</location>
    </subcellularLocation>
</comment>
<comment type="similarity">
    <text evidence="1">To E.coli K5 KpsD.</text>
</comment>
<evidence type="ECO:0000305" key="1"/>
<organism>
    <name type="scientific">Escherichia coli</name>
    <dbReference type="NCBI Taxonomy" id="562"/>
    <lineage>
        <taxon>Bacteria</taxon>
        <taxon>Pseudomonadati</taxon>
        <taxon>Pseudomonadota</taxon>
        <taxon>Gammaproteobacteria</taxon>
        <taxon>Enterobacterales</taxon>
        <taxon>Enterobacteriaceae</taxon>
        <taxon>Escherichia</taxon>
    </lineage>
</organism>
<proteinExistence type="evidence at protein level"/>
<dbReference type="EMBL" id="M64977">
    <property type="protein sequence ID" value="AAA21682.1"/>
    <property type="molecule type" value="Genomic_DNA"/>
</dbReference>
<dbReference type="PIR" id="I41324">
    <property type="entry name" value="I41324"/>
</dbReference>
<dbReference type="RefSeq" id="WP_001331697.1">
    <property type="nucleotide sequence ID" value="NZ_WVVR01000003.1"/>
</dbReference>
<dbReference type="SMR" id="Q03961"/>
<dbReference type="TCDB" id="1.B.18.1.2">
    <property type="family name" value="the outer membrane auxiliary (oma) protein family"/>
</dbReference>
<dbReference type="OMA" id="KISIWLW"/>
<dbReference type="GO" id="GO:0042597">
    <property type="term" value="C:periplasmic space"/>
    <property type="evidence" value="ECO:0007669"/>
    <property type="project" value="UniProtKB-SubCell"/>
</dbReference>
<dbReference type="GO" id="GO:0015159">
    <property type="term" value="F:polysaccharide transmembrane transporter activity"/>
    <property type="evidence" value="ECO:0007669"/>
    <property type="project" value="InterPro"/>
</dbReference>
<dbReference type="Gene3D" id="3.10.560.10">
    <property type="entry name" value="Outer membrane lipoprotein wza domain like"/>
    <property type="match status" value="2"/>
</dbReference>
<dbReference type="Gene3D" id="3.30.1950.10">
    <property type="entry name" value="wza like domain"/>
    <property type="match status" value="1"/>
</dbReference>
<dbReference type="InterPro" id="IPR049712">
    <property type="entry name" value="Poly_export"/>
</dbReference>
<dbReference type="InterPro" id="IPR003715">
    <property type="entry name" value="Poly_export_N"/>
</dbReference>
<dbReference type="InterPro" id="IPR019554">
    <property type="entry name" value="Soluble_ligand-bd"/>
</dbReference>
<dbReference type="PANTHER" id="PTHR33619">
    <property type="entry name" value="POLYSACCHARIDE EXPORT PROTEIN GFCE-RELATED"/>
    <property type="match status" value="1"/>
</dbReference>
<dbReference type="PANTHER" id="PTHR33619:SF3">
    <property type="entry name" value="POLYSACCHARIDE EXPORT PROTEIN GFCE-RELATED"/>
    <property type="match status" value="1"/>
</dbReference>
<dbReference type="Pfam" id="PF02563">
    <property type="entry name" value="Poly_export"/>
    <property type="match status" value="1"/>
</dbReference>
<dbReference type="Pfam" id="PF10531">
    <property type="entry name" value="SLBB"/>
    <property type="match status" value="1"/>
</dbReference>
<accession>Q03961</accession>
<reference key="1">
    <citation type="journal article" date="1994" name="J. Bacteriol.">
        <title>Nucleotide sequence and mutational analysis of the gene encoding KpsD, a periplasmic protein involved in transport of polysialic acid in Escherichia coli K1.</title>
        <authorList>
            <person name="Wunder D.E."/>
            <person name="Aaronson W."/>
            <person name="Hayes S.F."/>
            <person name="Bliss J.M."/>
            <person name="Silver R.P."/>
        </authorList>
    </citation>
    <scope>NUCLEOTIDE SEQUENCE [GENOMIC DNA]</scope>
    <scope>PARTIAL PROTEIN SEQUENCE</scope>
    <source>
        <strain>K1</strain>
    </source>
</reference>
<feature type="signal peptide">
    <location>
        <begin position="1"/>
        <end position="20"/>
    </location>
</feature>
<feature type="chain" id="PRO_0000021558" description="Polysialic acid transport protein KpsD">
    <location>
        <begin position="21"/>
        <end position="558"/>
    </location>
</feature>
<sequence length="558" mass="60371">MKLFKSILLIAACHAAQASAAIDINADPNLTGAAPLTGILNGQQSDTQNMSGFDNTPPPSPPVVMSRMFGAQLFNGTSADSGATVGFNPDYILNPGDSIQVRLWGAFTFDGALQVDPKGNIFLPNVGPVKVAGVSNSQLNALVTSKVKEVYQSNVNVYASLLQAQPVKVYVTGFVRNPGLYGGVTSDSLLNYLIKAGGVDPERGSYVDIVVKRGNRVRSNVNLYDFLLNGKLGLSQFADGDTIIVGPRQHTFSVQGDVFNSYDFEFRESSIPVTEALSWARPKPGATHITIMRKQGLQKRSEYYPISSAPGRMLQNGDTLIVSTDRYAGTIQVRVEGAHSGEHAMVLPYGSTMRAVLEKVRPNSMSQMNAVQLYRPSVAQRQKEMLNLSLQKLEEASLSAQSSTKEEASLRMQEAQLISRFVAKARTVVPKGEVILNESNIDSVLLEDGDVINIPEKTSLVMVHGEVLFPNAVSWQKGMTTEDYIEKCGGLTQKSGNARIIVIRQNGAAVNAEDVDSLKPGDEIMVLPKYESKNIEVTRGISTILYQLAVGAKVILSL</sequence>